<feature type="chain" id="PRO_1000024078" description="Dihydroorotase">
    <location>
        <begin position="1"/>
        <end position="428"/>
    </location>
</feature>
<feature type="active site" evidence="1">
    <location>
        <position position="304"/>
    </location>
</feature>
<feature type="binding site" evidence="1">
    <location>
        <position position="59"/>
    </location>
    <ligand>
        <name>Zn(2+)</name>
        <dbReference type="ChEBI" id="CHEBI:29105"/>
        <label>1</label>
    </ligand>
</feature>
<feature type="binding site" evidence="1">
    <location>
        <begin position="61"/>
        <end position="63"/>
    </location>
    <ligand>
        <name>substrate</name>
    </ligand>
</feature>
<feature type="binding site" evidence="1">
    <location>
        <position position="61"/>
    </location>
    <ligand>
        <name>Zn(2+)</name>
        <dbReference type="ChEBI" id="CHEBI:29105"/>
        <label>1</label>
    </ligand>
</feature>
<feature type="binding site" evidence="1">
    <location>
        <position position="93"/>
    </location>
    <ligand>
        <name>substrate</name>
    </ligand>
</feature>
<feature type="binding site" evidence="1">
    <location>
        <position position="151"/>
    </location>
    <ligand>
        <name>Zn(2+)</name>
        <dbReference type="ChEBI" id="CHEBI:29105"/>
        <label>1</label>
    </ligand>
</feature>
<feature type="binding site" evidence="1">
    <location>
        <position position="151"/>
    </location>
    <ligand>
        <name>Zn(2+)</name>
        <dbReference type="ChEBI" id="CHEBI:29105"/>
        <label>2</label>
    </ligand>
</feature>
<feature type="binding site" evidence="1">
    <location>
        <position position="178"/>
    </location>
    <ligand>
        <name>Zn(2+)</name>
        <dbReference type="ChEBI" id="CHEBI:29105"/>
        <label>2</label>
    </ligand>
</feature>
<feature type="binding site" evidence="1">
    <location>
        <position position="231"/>
    </location>
    <ligand>
        <name>Zn(2+)</name>
        <dbReference type="ChEBI" id="CHEBI:29105"/>
        <label>2</label>
    </ligand>
</feature>
<feature type="binding site" evidence="1">
    <location>
        <position position="277"/>
    </location>
    <ligand>
        <name>substrate</name>
    </ligand>
</feature>
<feature type="binding site" evidence="1">
    <location>
        <position position="304"/>
    </location>
    <ligand>
        <name>Zn(2+)</name>
        <dbReference type="ChEBI" id="CHEBI:29105"/>
        <label>1</label>
    </ligand>
</feature>
<feature type="binding site" evidence="1">
    <location>
        <position position="308"/>
    </location>
    <ligand>
        <name>substrate</name>
    </ligand>
</feature>
<feature type="binding site" evidence="1">
    <location>
        <begin position="322"/>
        <end position="323"/>
    </location>
    <ligand>
        <name>substrate</name>
    </ligand>
</feature>
<gene>
    <name evidence="1" type="primary">pyrC</name>
    <name type="ordered locus">BLi01770</name>
    <name type="ordered locus">BL02274</name>
</gene>
<dbReference type="EC" id="3.5.2.3" evidence="1"/>
<dbReference type="EMBL" id="CP000002">
    <property type="protein sequence ID" value="AAU23305.1"/>
    <property type="molecule type" value="Genomic_DNA"/>
</dbReference>
<dbReference type="EMBL" id="AE017333">
    <property type="protein sequence ID" value="AAU40665.1"/>
    <property type="molecule type" value="Genomic_DNA"/>
</dbReference>
<dbReference type="RefSeq" id="WP_003181620.1">
    <property type="nucleotide sequence ID" value="NC_006322.1"/>
</dbReference>
<dbReference type="SMR" id="Q65JU9"/>
<dbReference type="STRING" id="279010.BL02274"/>
<dbReference type="KEGG" id="bld:BLi01770"/>
<dbReference type="KEGG" id="bli:BL02274"/>
<dbReference type="eggNOG" id="COG0044">
    <property type="taxonomic scope" value="Bacteria"/>
</dbReference>
<dbReference type="HOGENOM" id="CLU_015572_1_0_9"/>
<dbReference type="UniPathway" id="UPA00070">
    <property type="reaction ID" value="UER00117"/>
</dbReference>
<dbReference type="Proteomes" id="UP000000606">
    <property type="component" value="Chromosome"/>
</dbReference>
<dbReference type="GO" id="GO:0005737">
    <property type="term" value="C:cytoplasm"/>
    <property type="evidence" value="ECO:0007669"/>
    <property type="project" value="TreeGrafter"/>
</dbReference>
<dbReference type="GO" id="GO:0004038">
    <property type="term" value="F:allantoinase activity"/>
    <property type="evidence" value="ECO:0007669"/>
    <property type="project" value="TreeGrafter"/>
</dbReference>
<dbReference type="GO" id="GO:0004151">
    <property type="term" value="F:dihydroorotase activity"/>
    <property type="evidence" value="ECO:0007669"/>
    <property type="project" value="UniProtKB-UniRule"/>
</dbReference>
<dbReference type="GO" id="GO:0008270">
    <property type="term" value="F:zinc ion binding"/>
    <property type="evidence" value="ECO:0007669"/>
    <property type="project" value="UniProtKB-UniRule"/>
</dbReference>
<dbReference type="GO" id="GO:0044205">
    <property type="term" value="P:'de novo' UMP biosynthetic process"/>
    <property type="evidence" value="ECO:0007669"/>
    <property type="project" value="UniProtKB-UniRule"/>
</dbReference>
<dbReference type="GO" id="GO:0006145">
    <property type="term" value="P:purine nucleobase catabolic process"/>
    <property type="evidence" value="ECO:0007669"/>
    <property type="project" value="TreeGrafter"/>
</dbReference>
<dbReference type="CDD" id="cd01317">
    <property type="entry name" value="DHOase_IIa"/>
    <property type="match status" value="1"/>
</dbReference>
<dbReference type="Gene3D" id="3.20.20.140">
    <property type="entry name" value="Metal-dependent hydrolases"/>
    <property type="match status" value="1"/>
</dbReference>
<dbReference type="Gene3D" id="2.30.40.10">
    <property type="entry name" value="Urease, subunit C, domain 1"/>
    <property type="match status" value="2"/>
</dbReference>
<dbReference type="HAMAP" id="MF_00220_B">
    <property type="entry name" value="PyrC_classI_B"/>
    <property type="match status" value="1"/>
</dbReference>
<dbReference type="InterPro" id="IPR006680">
    <property type="entry name" value="Amidohydro-rel"/>
</dbReference>
<dbReference type="InterPro" id="IPR004722">
    <property type="entry name" value="DHOase"/>
</dbReference>
<dbReference type="InterPro" id="IPR050138">
    <property type="entry name" value="DHOase/Allantoinase_Hydrolase"/>
</dbReference>
<dbReference type="InterPro" id="IPR002195">
    <property type="entry name" value="Dihydroorotase_CS"/>
</dbReference>
<dbReference type="InterPro" id="IPR011059">
    <property type="entry name" value="Metal-dep_hydrolase_composite"/>
</dbReference>
<dbReference type="InterPro" id="IPR032466">
    <property type="entry name" value="Metal_Hydrolase"/>
</dbReference>
<dbReference type="NCBIfam" id="NF006837">
    <property type="entry name" value="PRK09357.1-2"/>
    <property type="match status" value="1"/>
</dbReference>
<dbReference type="NCBIfam" id="TIGR00857">
    <property type="entry name" value="pyrC_multi"/>
    <property type="match status" value="1"/>
</dbReference>
<dbReference type="PANTHER" id="PTHR43668">
    <property type="entry name" value="ALLANTOINASE"/>
    <property type="match status" value="1"/>
</dbReference>
<dbReference type="PANTHER" id="PTHR43668:SF2">
    <property type="entry name" value="ALLANTOINASE"/>
    <property type="match status" value="1"/>
</dbReference>
<dbReference type="Pfam" id="PF01979">
    <property type="entry name" value="Amidohydro_1"/>
    <property type="match status" value="1"/>
</dbReference>
<dbReference type="SUPFAM" id="SSF51338">
    <property type="entry name" value="Composite domain of metallo-dependent hydrolases"/>
    <property type="match status" value="1"/>
</dbReference>
<dbReference type="SUPFAM" id="SSF51556">
    <property type="entry name" value="Metallo-dependent hydrolases"/>
    <property type="match status" value="1"/>
</dbReference>
<dbReference type="PROSITE" id="PS00482">
    <property type="entry name" value="DIHYDROOROTASE_1"/>
    <property type="match status" value="1"/>
</dbReference>
<dbReference type="PROSITE" id="PS00483">
    <property type="entry name" value="DIHYDROOROTASE_2"/>
    <property type="match status" value="1"/>
</dbReference>
<organism>
    <name type="scientific">Bacillus licheniformis (strain ATCC 14580 / DSM 13 / JCM 2505 / CCUG 7422 / NBRC 12200 / NCIMB 9375 / NCTC 10341 / NRRL NRS-1264 / Gibson 46)</name>
    <dbReference type="NCBI Taxonomy" id="279010"/>
    <lineage>
        <taxon>Bacteria</taxon>
        <taxon>Bacillati</taxon>
        <taxon>Bacillota</taxon>
        <taxon>Bacilli</taxon>
        <taxon>Bacillales</taxon>
        <taxon>Bacillaceae</taxon>
        <taxon>Bacillus</taxon>
    </lineage>
</organism>
<sequence length="428" mass="46684">MSYLIKNGFMLDEKGEKVQRDIRVEGDAISEIGSLEAASGETVIDADGLFVSPGLVDLHVHFREPGGEKKETIETGAKAAARGGFTTVAAMPNTRPVPDTKEQMEWLVNRIDETASVRVLPYASITIRQTGREMTDFEGLKDAGAFAFTDDGVGVQTAGMMYEAMKKAASINKAIVAHCEDNSLIYGGSVHDGEFAKANGLNGIPSVCEAVHIARDVLLAEAAGCHYHVCHISTKESVRVVRDAKKAGIRVTAEVTPHHLLLSDSDIPGLDTNYKMNPPLRSPEDREALLEGLRDGTIDFIATDHAPHTEEEKQQTMSLAPFGIVGLETAFPLLYTHFVKTGKWTLKQLHDYMTVKPCEAFGLPYGKLEAGRSADITLIDLEREEKIDKSTFLSKGKNTPFDGISCFGWPAMTMAKGKLVYQEGRLVK</sequence>
<reference key="1">
    <citation type="journal article" date="2004" name="J. Mol. Microbiol. Biotechnol.">
        <title>The complete genome sequence of Bacillus licheniformis DSM13, an organism with great industrial potential.</title>
        <authorList>
            <person name="Veith B."/>
            <person name="Herzberg C."/>
            <person name="Steckel S."/>
            <person name="Feesche J."/>
            <person name="Maurer K.H."/>
            <person name="Ehrenreich P."/>
            <person name="Baeumer S."/>
            <person name="Henne A."/>
            <person name="Liesegang H."/>
            <person name="Merkl R."/>
            <person name="Ehrenreich A."/>
            <person name="Gottschalk G."/>
        </authorList>
    </citation>
    <scope>NUCLEOTIDE SEQUENCE [LARGE SCALE GENOMIC DNA]</scope>
    <source>
        <strain>ATCC 14580 / DSM 13 / JCM 2505 / CCUG 7422 / NBRC 12200 / NCIMB 9375 / NCTC 10341 / NRRL NRS-1264 / Gibson 46</strain>
    </source>
</reference>
<reference key="2">
    <citation type="journal article" date="2004" name="Genome Biol.">
        <title>Complete genome sequence of the industrial bacterium Bacillus licheniformis and comparisons with closely related Bacillus species.</title>
        <authorList>
            <person name="Rey M.W."/>
            <person name="Ramaiya P."/>
            <person name="Nelson B.A."/>
            <person name="Brody-Karpin S.D."/>
            <person name="Zaretsky E.J."/>
            <person name="Tang M."/>
            <person name="Lopez de Leon A."/>
            <person name="Xiang H."/>
            <person name="Gusti V."/>
            <person name="Clausen I.G."/>
            <person name="Olsen P.B."/>
            <person name="Rasmussen M.D."/>
            <person name="Andersen J.T."/>
            <person name="Joergensen P.L."/>
            <person name="Larsen T.S."/>
            <person name="Sorokin A."/>
            <person name="Bolotin A."/>
            <person name="Lapidus A."/>
            <person name="Galleron N."/>
            <person name="Ehrlich S.D."/>
            <person name="Berka R.M."/>
        </authorList>
    </citation>
    <scope>NUCLEOTIDE SEQUENCE [LARGE SCALE GENOMIC DNA]</scope>
    <source>
        <strain>ATCC 14580 / DSM 13 / JCM 2505 / CCUG 7422 / NBRC 12200 / NCIMB 9375 / NCTC 10341 / NRRL NRS-1264 / Gibson 46</strain>
    </source>
</reference>
<comment type="function">
    <text evidence="1">Catalyzes the reversible cyclization of carbamoyl aspartate to dihydroorotate.</text>
</comment>
<comment type="catalytic activity">
    <reaction evidence="1">
        <text>(S)-dihydroorotate + H2O = N-carbamoyl-L-aspartate + H(+)</text>
        <dbReference type="Rhea" id="RHEA:24296"/>
        <dbReference type="ChEBI" id="CHEBI:15377"/>
        <dbReference type="ChEBI" id="CHEBI:15378"/>
        <dbReference type="ChEBI" id="CHEBI:30864"/>
        <dbReference type="ChEBI" id="CHEBI:32814"/>
        <dbReference type="EC" id="3.5.2.3"/>
    </reaction>
</comment>
<comment type="cofactor">
    <cofactor evidence="1">
        <name>Zn(2+)</name>
        <dbReference type="ChEBI" id="CHEBI:29105"/>
    </cofactor>
    <text evidence="1">Binds 2 Zn(2+) ions per subunit.</text>
</comment>
<comment type="pathway">
    <text evidence="1">Pyrimidine metabolism; UMP biosynthesis via de novo pathway; (S)-dihydroorotate from bicarbonate: step 3/3.</text>
</comment>
<comment type="similarity">
    <text evidence="1">Belongs to the metallo-dependent hydrolases superfamily. DHOase family. Class I DHOase subfamily.</text>
</comment>
<protein>
    <recommendedName>
        <fullName evidence="1">Dihydroorotase</fullName>
        <shortName evidence="1">DHOase</shortName>
        <ecNumber evidence="1">3.5.2.3</ecNumber>
    </recommendedName>
</protein>
<name>PYRC_BACLD</name>
<accession>Q65JU9</accession>
<accession>Q62VA4</accession>
<keyword id="KW-0378">Hydrolase</keyword>
<keyword id="KW-0479">Metal-binding</keyword>
<keyword id="KW-0665">Pyrimidine biosynthesis</keyword>
<keyword id="KW-1185">Reference proteome</keyword>
<keyword id="KW-0862">Zinc</keyword>
<proteinExistence type="inferred from homology"/>
<evidence type="ECO:0000255" key="1">
    <source>
        <dbReference type="HAMAP-Rule" id="MF_00220"/>
    </source>
</evidence>